<name>YQGF_LIMRJ</name>
<sequence>MRLMGLDVGSKTVGISVSDPLGWTAQAVEIIPIDEENEIFGIDRVAELVKKEQVAGFVIGLPKNMNNTEGPRVEASQHYGKLLQQRFPDIPIDFQDERLTTVEAHRMLVEEADISRAKQKKVIDEVAATFILQSYLDRHGRLVNKLK</sequence>
<feature type="chain" id="PRO_1000131045" description="Putative pre-16S rRNA nuclease">
    <location>
        <begin position="1"/>
        <end position="147"/>
    </location>
</feature>
<accession>B2G6F5</accession>
<gene>
    <name type="ordered locus">LAR_0521</name>
</gene>
<evidence type="ECO:0000255" key="1">
    <source>
        <dbReference type="HAMAP-Rule" id="MF_00651"/>
    </source>
</evidence>
<reference key="1">
    <citation type="journal article" date="2008" name="DNA Res.">
        <title>Comparative genome analysis of Lactobacillus reuteri and Lactobacillus fermentum reveal a genomic island for reuterin and cobalamin production.</title>
        <authorList>
            <person name="Morita H."/>
            <person name="Toh H."/>
            <person name="Fukuda S."/>
            <person name="Horikawa H."/>
            <person name="Oshima K."/>
            <person name="Suzuki T."/>
            <person name="Murakami M."/>
            <person name="Hisamatsu S."/>
            <person name="Kato Y."/>
            <person name="Takizawa T."/>
            <person name="Fukuoka H."/>
            <person name="Yoshimura T."/>
            <person name="Itoh K."/>
            <person name="O'Sullivan D.J."/>
            <person name="McKay L.L."/>
            <person name="Ohno H."/>
            <person name="Kikuchi J."/>
            <person name="Masaoka T."/>
            <person name="Hattori M."/>
        </authorList>
    </citation>
    <scope>NUCLEOTIDE SEQUENCE [LARGE SCALE GENOMIC DNA]</scope>
    <source>
        <strain>JCM 1112</strain>
    </source>
</reference>
<comment type="function">
    <text evidence="1">Could be a nuclease involved in processing of the 5'-end of pre-16S rRNA.</text>
</comment>
<comment type="subcellular location">
    <subcellularLocation>
        <location evidence="1">Cytoplasm</location>
    </subcellularLocation>
</comment>
<comment type="similarity">
    <text evidence="1">Belongs to the YqgF nuclease family.</text>
</comment>
<dbReference type="EC" id="3.1.-.-" evidence="1"/>
<dbReference type="EMBL" id="AP007281">
    <property type="protein sequence ID" value="BAG25037.1"/>
    <property type="molecule type" value="Genomic_DNA"/>
</dbReference>
<dbReference type="SMR" id="B2G6F5"/>
<dbReference type="KEGG" id="lrf:LAR_0521"/>
<dbReference type="HOGENOM" id="CLU_098240_2_0_9"/>
<dbReference type="GO" id="GO:0005829">
    <property type="term" value="C:cytosol"/>
    <property type="evidence" value="ECO:0007669"/>
    <property type="project" value="TreeGrafter"/>
</dbReference>
<dbReference type="GO" id="GO:0004518">
    <property type="term" value="F:nuclease activity"/>
    <property type="evidence" value="ECO:0007669"/>
    <property type="project" value="UniProtKB-KW"/>
</dbReference>
<dbReference type="GO" id="GO:0000967">
    <property type="term" value="P:rRNA 5'-end processing"/>
    <property type="evidence" value="ECO:0007669"/>
    <property type="project" value="UniProtKB-UniRule"/>
</dbReference>
<dbReference type="CDD" id="cd16964">
    <property type="entry name" value="YqgF"/>
    <property type="match status" value="1"/>
</dbReference>
<dbReference type="Gene3D" id="3.30.420.140">
    <property type="entry name" value="YqgF/RNase H-like domain"/>
    <property type="match status" value="1"/>
</dbReference>
<dbReference type="HAMAP" id="MF_00651">
    <property type="entry name" value="Nuclease_YqgF"/>
    <property type="match status" value="1"/>
</dbReference>
<dbReference type="InterPro" id="IPR012337">
    <property type="entry name" value="RNaseH-like_sf"/>
</dbReference>
<dbReference type="InterPro" id="IPR005227">
    <property type="entry name" value="YqgF"/>
</dbReference>
<dbReference type="InterPro" id="IPR006641">
    <property type="entry name" value="YqgF/RNaseH-like_dom"/>
</dbReference>
<dbReference type="InterPro" id="IPR037027">
    <property type="entry name" value="YqgF/RNaseH-like_dom_sf"/>
</dbReference>
<dbReference type="NCBIfam" id="TIGR00250">
    <property type="entry name" value="RNAse_H_YqgF"/>
    <property type="match status" value="1"/>
</dbReference>
<dbReference type="PANTHER" id="PTHR33317">
    <property type="entry name" value="POLYNUCLEOTIDYL TRANSFERASE, RIBONUCLEASE H-LIKE SUPERFAMILY PROTEIN"/>
    <property type="match status" value="1"/>
</dbReference>
<dbReference type="PANTHER" id="PTHR33317:SF4">
    <property type="entry name" value="POLYNUCLEOTIDYL TRANSFERASE, RIBONUCLEASE H-LIKE SUPERFAMILY PROTEIN"/>
    <property type="match status" value="1"/>
</dbReference>
<dbReference type="Pfam" id="PF03652">
    <property type="entry name" value="RuvX"/>
    <property type="match status" value="1"/>
</dbReference>
<dbReference type="SMART" id="SM00732">
    <property type="entry name" value="YqgFc"/>
    <property type="match status" value="1"/>
</dbReference>
<dbReference type="SUPFAM" id="SSF53098">
    <property type="entry name" value="Ribonuclease H-like"/>
    <property type="match status" value="1"/>
</dbReference>
<keyword id="KW-0963">Cytoplasm</keyword>
<keyword id="KW-0378">Hydrolase</keyword>
<keyword id="KW-0540">Nuclease</keyword>
<keyword id="KW-0690">Ribosome biogenesis</keyword>
<proteinExistence type="inferred from homology"/>
<protein>
    <recommendedName>
        <fullName evidence="1">Putative pre-16S rRNA nuclease</fullName>
        <ecNumber evidence="1">3.1.-.-</ecNumber>
    </recommendedName>
</protein>
<organism>
    <name type="scientific">Limosilactobacillus reuteri subsp. reuteri (strain JCM 1112)</name>
    <name type="common">Lactobacillus reuteri</name>
    <dbReference type="NCBI Taxonomy" id="557433"/>
    <lineage>
        <taxon>Bacteria</taxon>
        <taxon>Bacillati</taxon>
        <taxon>Bacillota</taxon>
        <taxon>Bacilli</taxon>
        <taxon>Lactobacillales</taxon>
        <taxon>Lactobacillaceae</taxon>
        <taxon>Limosilactobacillus</taxon>
    </lineage>
</organism>